<sequence length="764" mass="86583">MRPGSLLLLVLLLALSRSLRGKECASPPCECHQEDDFRVTCKELHRIPSLPPSTQTLKLIETHLKTIPSLAFSSLPNISRIYLSIDATLQRLEPHSFYNLSKMTHIEIRNTRSLTYIDPDALTELPLLKFLGIFNTGLRIFPDLTKIYSTDIFFILEITDNPYMTSVPENAFQGLCNETLTLKLYNNGFTSVQGHAFNGTKLDAVYLNKNKYLTAIDNDAFGGVYSGPTLLDVSSTSVTALPSKGLEHLKELIAKDTWTLKKLPLSLSFLHLTRADLSYPSHCCAFKNQKKIRGILESLMCNESSIRNLRQRKSVNILRGPIYQEYEEDPGDNSVGYKQNSKFQESPSNSHYYVFFEEQEDEVVGFGQELKNPQEETLQAFESHYDYTVCGDNEDMVCTPKSDEFNPCEDIMGYRFLRIVVWFVSLLALLGNIFVLLILLTSHYKLTVPRFLMCNLAFADFCMGVYLLLIASVDLYTHSEYYNHAIDWQTGPGCNTAGFFTVFASELSVYTLTVITLERWYAITFAMRLDRKIRLRHAYTIMAGGWVSCFLLALLPMVGISSYAKVSICLPMDTDTPLALAYIVLVLLLNVVAFVVVCSCYVKIYITVRNPQYNPRDKDTKIAKRMAVLIFTDFMCMAPISFYALSALMNKPLITVTNSKILLVLFYPLNSCANPFLYAIFTKAFQRDVFILLSKFGICKRQAQAYQGQRVCPNNSTGIQIQKIPQDTRQSLPNMQDTYELLGNSQLAPKLQGQISEEYKQTAL</sequence>
<name>TSHR_MOUSE</name>
<keyword id="KW-1003">Cell membrane</keyword>
<keyword id="KW-0225">Disease variant</keyword>
<keyword id="KW-1015">Disulfide bond</keyword>
<keyword id="KW-0297">G-protein coupled receptor</keyword>
<keyword id="KW-0325">Glycoprotein</keyword>
<keyword id="KW-0433">Leucine-rich repeat</keyword>
<keyword id="KW-0472">Membrane</keyword>
<keyword id="KW-0675">Receptor</keyword>
<keyword id="KW-1185">Reference proteome</keyword>
<keyword id="KW-0677">Repeat</keyword>
<keyword id="KW-0732">Signal</keyword>
<keyword id="KW-0765">Sulfation</keyword>
<keyword id="KW-0807">Transducer</keyword>
<keyword id="KW-0812">Transmembrane</keyword>
<keyword id="KW-1133">Transmembrane helix</keyword>
<feature type="signal peptide" evidence="1">
    <location>
        <begin position="1"/>
        <end position="21"/>
    </location>
</feature>
<feature type="chain" id="PRO_0000012787" description="Thyrotropin receptor">
    <location>
        <begin position="22"/>
        <end position="764"/>
    </location>
</feature>
<feature type="topological domain" description="Extracellular" evidence="4">
    <location>
        <begin position="22"/>
        <end position="413"/>
    </location>
</feature>
<feature type="transmembrane region" description="Helical; Name=1" evidence="4">
    <location>
        <begin position="414"/>
        <end position="441"/>
    </location>
</feature>
<feature type="topological domain" description="Cytoplasmic" evidence="4">
    <location>
        <begin position="442"/>
        <end position="450"/>
    </location>
</feature>
<feature type="transmembrane region" description="Helical; Name=2" evidence="4">
    <location>
        <begin position="451"/>
        <end position="473"/>
    </location>
</feature>
<feature type="topological domain" description="Extracellular" evidence="4">
    <location>
        <begin position="474"/>
        <end position="494"/>
    </location>
</feature>
<feature type="transmembrane region" description="Helical; Name=3" evidence="4">
    <location>
        <begin position="495"/>
        <end position="517"/>
    </location>
</feature>
<feature type="topological domain" description="Cytoplasmic" evidence="4">
    <location>
        <begin position="518"/>
        <end position="537"/>
    </location>
</feature>
<feature type="transmembrane region" description="Helical; Name=4" evidence="4">
    <location>
        <begin position="538"/>
        <end position="560"/>
    </location>
</feature>
<feature type="topological domain" description="Extracellular" evidence="4">
    <location>
        <begin position="561"/>
        <end position="580"/>
    </location>
</feature>
<feature type="transmembrane region" description="Helical; Name=5" evidence="4">
    <location>
        <begin position="581"/>
        <end position="602"/>
    </location>
</feature>
<feature type="topological domain" description="Cytoplasmic" evidence="4">
    <location>
        <begin position="603"/>
        <end position="625"/>
    </location>
</feature>
<feature type="transmembrane region" description="Helical; Name=6" evidence="4">
    <location>
        <begin position="626"/>
        <end position="649"/>
    </location>
</feature>
<feature type="topological domain" description="Extracellular" evidence="4">
    <location>
        <begin position="650"/>
        <end position="660"/>
    </location>
</feature>
<feature type="transmembrane region" description="Helical; Name=7" evidence="4">
    <location>
        <begin position="661"/>
        <end position="682"/>
    </location>
</feature>
<feature type="topological domain" description="Cytoplasmic" evidence="4">
    <location>
        <begin position="683"/>
        <end position="764"/>
    </location>
</feature>
<feature type="repeat" description="LRR 1">
    <location>
        <begin position="100"/>
        <end position="124"/>
    </location>
</feature>
<feature type="repeat" description="LRR 2">
    <location>
        <begin position="125"/>
        <end position="150"/>
    </location>
</feature>
<feature type="repeat" description="LRR 3">
    <location>
        <begin position="151"/>
        <end position="174"/>
    </location>
</feature>
<feature type="repeat" description="LRR 4">
    <location>
        <begin position="176"/>
        <end position="199"/>
    </location>
</feature>
<feature type="repeat" description="LRR 5">
    <location>
        <begin position="200"/>
        <end position="223"/>
    </location>
</feature>
<feature type="repeat" description="LRR 6">
    <location>
        <begin position="225"/>
        <end position="248"/>
    </location>
</feature>
<feature type="repeat" description="LRR 7">
    <location>
        <begin position="264"/>
        <end position="288"/>
    </location>
</feature>
<feature type="short sequence motif" description="PDZ-binding">
    <location>
        <begin position="762"/>
        <end position="764"/>
    </location>
</feature>
<feature type="modified residue" description="Sulfotyrosine" evidence="2">
    <location>
        <position position="385"/>
    </location>
</feature>
<feature type="glycosylation site" description="N-linked (GlcNAc...) asparagine" evidence="4">
    <location>
        <position position="77"/>
    </location>
</feature>
<feature type="glycosylation site" description="N-linked (GlcNAc...) asparagine" evidence="4">
    <location>
        <position position="99"/>
    </location>
</feature>
<feature type="glycosylation site" description="N-linked (GlcNAc...) asparagine" evidence="4">
    <location>
        <position position="177"/>
    </location>
</feature>
<feature type="glycosylation site" description="N-linked (GlcNAc...) asparagine" evidence="4">
    <location>
        <position position="198"/>
    </location>
</feature>
<feature type="glycosylation site" description="N-linked (GlcNAc...) asparagine" evidence="4">
    <location>
        <position position="302"/>
    </location>
</feature>
<feature type="disulfide bond" evidence="5">
    <location>
        <begin position="31"/>
        <end position="41"/>
    </location>
</feature>
<feature type="disulfide bond" evidence="5">
    <location>
        <begin position="494"/>
        <end position="569"/>
    </location>
</feature>
<feature type="sequence variant" description="In hypothyroidism.">
    <original>P</original>
    <variation>L</variation>
    <location>
        <position position="556"/>
    </location>
</feature>
<feature type="sequence conflict" description="In Ref. 2; BAB29408." evidence="6" ref="2">
    <original>R</original>
    <variation>S</variation>
    <location>
        <position position="312"/>
    </location>
</feature>
<reference key="1">
    <citation type="journal article" date="1994" name="Mol. Endocrinol.">
        <title>Identification of a point mutation in the thyrotropin receptor of the hyt/hyt hypothyroid mouse.</title>
        <authorList>
            <person name="Stein S.A."/>
            <person name="Oates E.L."/>
            <person name="Hall C.R."/>
            <person name="Grumbles R.M."/>
            <person name="Fernandez L.M."/>
            <person name="Taylor N.A."/>
            <person name="Puett D."/>
            <person name="Jin S."/>
        </authorList>
    </citation>
    <scope>NUCLEOTIDE SEQUENCE [MRNA]</scope>
    <scope>INVOLVEMENT IN HYPOTHYROIDISM</scope>
    <source>
        <strain>BALB/cJ</strain>
        <tissue>Thyroid</tissue>
    </source>
</reference>
<reference key="2">
    <citation type="journal article" date="2005" name="Science">
        <title>The transcriptional landscape of the mammalian genome.</title>
        <authorList>
            <person name="Carninci P."/>
            <person name="Kasukawa T."/>
            <person name="Katayama S."/>
            <person name="Gough J."/>
            <person name="Frith M.C."/>
            <person name="Maeda N."/>
            <person name="Oyama R."/>
            <person name="Ravasi T."/>
            <person name="Lenhard B."/>
            <person name="Wells C."/>
            <person name="Kodzius R."/>
            <person name="Shimokawa K."/>
            <person name="Bajic V.B."/>
            <person name="Brenner S.E."/>
            <person name="Batalov S."/>
            <person name="Forrest A.R."/>
            <person name="Zavolan M."/>
            <person name="Davis M.J."/>
            <person name="Wilming L.G."/>
            <person name="Aidinis V."/>
            <person name="Allen J.E."/>
            <person name="Ambesi-Impiombato A."/>
            <person name="Apweiler R."/>
            <person name="Aturaliya R.N."/>
            <person name="Bailey T.L."/>
            <person name="Bansal M."/>
            <person name="Baxter L."/>
            <person name="Beisel K.W."/>
            <person name="Bersano T."/>
            <person name="Bono H."/>
            <person name="Chalk A.M."/>
            <person name="Chiu K.P."/>
            <person name="Choudhary V."/>
            <person name="Christoffels A."/>
            <person name="Clutterbuck D.R."/>
            <person name="Crowe M.L."/>
            <person name="Dalla E."/>
            <person name="Dalrymple B.P."/>
            <person name="de Bono B."/>
            <person name="Della Gatta G."/>
            <person name="di Bernardo D."/>
            <person name="Down T."/>
            <person name="Engstrom P."/>
            <person name="Fagiolini M."/>
            <person name="Faulkner G."/>
            <person name="Fletcher C.F."/>
            <person name="Fukushima T."/>
            <person name="Furuno M."/>
            <person name="Futaki S."/>
            <person name="Gariboldi M."/>
            <person name="Georgii-Hemming P."/>
            <person name="Gingeras T.R."/>
            <person name="Gojobori T."/>
            <person name="Green R.E."/>
            <person name="Gustincich S."/>
            <person name="Harbers M."/>
            <person name="Hayashi Y."/>
            <person name="Hensch T.K."/>
            <person name="Hirokawa N."/>
            <person name="Hill D."/>
            <person name="Huminiecki L."/>
            <person name="Iacono M."/>
            <person name="Ikeo K."/>
            <person name="Iwama A."/>
            <person name="Ishikawa T."/>
            <person name="Jakt M."/>
            <person name="Kanapin A."/>
            <person name="Katoh M."/>
            <person name="Kawasawa Y."/>
            <person name="Kelso J."/>
            <person name="Kitamura H."/>
            <person name="Kitano H."/>
            <person name="Kollias G."/>
            <person name="Krishnan S.P."/>
            <person name="Kruger A."/>
            <person name="Kummerfeld S.K."/>
            <person name="Kurochkin I.V."/>
            <person name="Lareau L.F."/>
            <person name="Lazarevic D."/>
            <person name="Lipovich L."/>
            <person name="Liu J."/>
            <person name="Liuni S."/>
            <person name="McWilliam S."/>
            <person name="Madan Babu M."/>
            <person name="Madera M."/>
            <person name="Marchionni L."/>
            <person name="Matsuda H."/>
            <person name="Matsuzawa S."/>
            <person name="Miki H."/>
            <person name="Mignone F."/>
            <person name="Miyake S."/>
            <person name="Morris K."/>
            <person name="Mottagui-Tabar S."/>
            <person name="Mulder N."/>
            <person name="Nakano N."/>
            <person name="Nakauchi H."/>
            <person name="Ng P."/>
            <person name="Nilsson R."/>
            <person name="Nishiguchi S."/>
            <person name="Nishikawa S."/>
            <person name="Nori F."/>
            <person name="Ohara O."/>
            <person name="Okazaki Y."/>
            <person name="Orlando V."/>
            <person name="Pang K.C."/>
            <person name="Pavan W.J."/>
            <person name="Pavesi G."/>
            <person name="Pesole G."/>
            <person name="Petrovsky N."/>
            <person name="Piazza S."/>
            <person name="Reed J."/>
            <person name="Reid J.F."/>
            <person name="Ring B.Z."/>
            <person name="Ringwald M."/>
            <person name="Rost B."/>
            <person name="Ruan Y."/>
            <person name="Salzberg S.L."/>
            <person name="Sandelin A."/>
            <person name="Schneider C."/>
            <person name="Schoenbach C."/>
            <person name="Sekiguchi K."/>
            <person name="Semple C.A."/>
            <person name="Seno S."/>
            <person name="Sessa L."/>
            <person name="Sheng Y."/>
            <person name="Shibata Y."/>
            <person name="Shimada H."/>
            <person name="Shimada K."/>
            <person name="Silva D."/>
            <person name="Sinclair B."/>
            <person name="Sperling S."/>
            <person name="Stupka E."/>
            <person name="Sugiura K."/>
            <person name="Sultana R."/>
            <person name="Takenaka Y."/>
            <person name="Taki K."/>
            <person name="Tammoja K."/>
            <person name="Tan S.L."/>
            <person name="Tang S."/>
            <person name="Taylor M.S."/>
            <person name="Tegner J."/>
            <person name="Teichmann S.A."/>
            <person name="Ueda H.R."/>
            <person name="van Nimwegen E."/>
            <person name="Verardo R."/>
            <person name="Wei C.L."/>
            <person name="Yagi K."/>
            <person name="Yamanishi H."/>
            <person name="Zabarovsky E."/>
            <person name="Zhu S."/>
            <person name="Zimmer A."/>
            <person name="Hide W."/>
            <person name="Bult C."/>
            <person name="Grimmond S.M."/>
            <person name="Teasdale R.D."/>
            <person name="Liu E.T."/>
            <person name="Brusic V."/>
            <person name="Quackenbush J."/>
            <person name="Wahlestedt C."/>
            <person name="Mattick J.S."/>
            <person name="Hume D.A."/>
            <person name="Kai C."/>
            <person name="Sasaki D."/>
            <person name="Tomaru Y."/>
            <person name="Fukuda S."/>
            <person name="Kanamori-Katayama M."/>
            <person name="Suzuki M."/>
            <person name="Aoki J."/>
            <person name="Arakawa T."/>
            <person name="Iida J."/>
            <person name="Imamura K."/>
            <person name="Itoh M."/>
            <person name="Kato T."/>
            <person name="Kawaji H."/>
            <person name="Kawagashira N."/>
            <person name="Kawashima T."/>
            <person name="Kojima M."/>
            <person name="Kondo S."/>
            <person name="Konno H."/>
            <person name="Nakano K."/>
            <person name="Ninomiya N."/>
            <person name="Nishio T."/>
            <person name="Okada M."/>
            <person name="Plessy C."/>
            <person name="Shibata K."/>
            <person name="Shiraki T."/>
            <person name="Suzuki S."/>
            <person name="Tagami M."/>
            <person name="Waki K."/>
            <person name="Watahiki A."/>
            <person name="Okamura-Oho Y."/>
            <person name="Suzuki H."/>
            <person name="Kawai J."/>
            <person name="Hayashizaki Y."/>
        </authorList>
    </citation>
    <scope>NUCLEOTIDE SEQUENCE [LARGE SCALE MRNA]</scope>
    <source>
        <strain>C57BL/6J</strain>
        <tissue>Skin</tissue>
    </source>
</reference>
<reference key="3">
    <citation type="journal article" date="2004" name="Genome Res.">
        <title>The status, quality, and expansion of the NIH full-length cDNA project: the Mammalian Gene Collection (MGC).</title>
        <authorList>
            <consortium name="The MGC Project Team"/>
        </authorList>
    </citation>
    <scope>NUCLEOTIDE SEQUENCE [LARGE SCALE MRNA]</scope>
    <source>
        <strain>C57BL/6J</strain>
        <tissue>Eye</tissue>
    </source>
</reference>
<comment type="function">
    <text evidence="2 3">Receptor for the thyroid-stimulating hormone (TSH) or thyrotropin. Also acts as a receptor for the heterodimeric glycoprotein hormone (GPHA2:GPHB5) or thyrostimulin. The activity of this receptor is mediated by G proteins which activate adenylate cyclase. Plays a central role in controlling thyroid cell metabolism.</text>
</comment>
<comment type="subunit">
    <text evidence="2">Interacts with heterodimer GPHA2:GPHB5; this interaction stimulates cAMP production. Interacts (via the PDZ-binding motif) with SCRIB; regulates TSHR trafficking and function.</text>
</comment>
<comment type="subcellular location">
    <subcellularLocation>
        <location evidence="2">Cell membrane</location>
        <topology evidence="2">Multi-pass membrane protein</topology>
    </subcellularLocation>
    <subcellularLocation>
        <location evidence="2">Basolateral cell membrane</location>
        <topology evidence="2">Multi-pass membrane protein</topology>
    </subcellularLocation>
</comment>
<comment type="PTM">
    <text evidence="2">Glycosylated.</text>
</comment>
<comment type="PTM">
    <text evidence="2">Sulfated. Sulfation on Tyr-385 plays a role in thyrotropin receptor binding and activation.</text>
</comment>
<comment type="disease">
    <text evidence="7">Defects in Tshr are the cause of hyt/hyt hypothyroidism, an autosomal recessive, fetal-onset, severe hypothyroidism related to TSH hyporesponsiveness and associated with elevated TSH.</text>
</comment>
<comment type="similarity">
    <text evidence="5">Belongs to the G-protein coupled receptor 1 family. FSH/LSH/TSH subfamily.</text>
</comment>
<gene>
    <name type="primary">Tshr</name>
</gene>
<evidence type="ECO:0000250" key="1"/>
<evidence type="ECO:0000250" key="2">
    <source>
        <dbReference type="UniProtKB" id="P16473"/>
    </source>
</evidence>
<evidence type="ECO:0000250" key="3">
    <source>
        <dbReference type="UniProtKB" id="P21463"/>
    </source>
</evidence>
<evidence type="ECO:0000255" key="4"/>
<evidence type="ECO:0000255" key="5">
    <source>
        <dbReference type="PROSITE-ProRule" id="PRU00521"/>
    </source>
</evidence>
<evidence type="ECO:0000305" key="6"/>
<evidence type="ECO:0000305" key="7">
    <source>
    </source>
</evidence>
<dbReference type="EMBL" id="U02601">
    <property type="protein sequence ID" value="AAA53209.1"/>
    <property type="molecule type" value="mRNA"/>
</dbReference>
<dbReference type="EMBL" id="U02602">
    <property type="protein sequence ID" value="AAB60455.1"/>
    <property type="molecule type" value="mRNA"/>
</dbReference>
<dbReference type="EMBL" id="AK014519">
    <property type="protein sequence ID" value="BAB29408.1"/>
    <property type="molecule type" value="mRNA"/>
</dbReference>
<dbReference type="EMBL" id="AK029084">
    <property type="protein sequence ID" value="BAC26286.1"/>
    <property type="molecule type" value="mRNA"/>
</dbReference>
<dbReference type="EMBL" id="BC086691">
    <property type="protein sequence ID" value="AAH86691.1"/>
    <property type="molecule type" value="mRNA"/>
</dbReference>
<dbReference type="EMBL" id="BC092523">
    <property type="protein sequence ID" value="AAH92523.1"/>
    <property type="molecule type" value="mRNA"/>
</dbReference>
<dbReference type="CCDS" id="CCDS26088.1"/>
<dbReference type="PIR" id="I48882">
    <property type="entry name" value="I48882"/>
</dbReference>
<dbReference type="RefSeq" id="NP_035778.3">
    <property type="nucleotide sequence ID" value="NM_011648.5"/>
</dbReference>
<dbReference type="SMR" id="P47750"/>
<dbReference type="FunCoup" id="P47750">
    <property type="interactions" value="635"/>
</dbReference>
<dbReference type="STRING" id="10090.ENSMUSP00000021346"/>
<dbReference type="GlyCosmos" id="P47750">
    <property type="glycosylation" value="5 sites, No reported glycans"/>
</dbReference>
<dbReference type="GlyGen" id="P47750">
    <property type="glycosylation" value="5 sites, 1 N-linked glycan (1 site)"/>
</dbReference>
<dbReference type="iPTMnet" id="P47750"/>
<dbReference type="PhosphoSitePlus" id="P47750"/>
<dbReference type="SwissPalm" id="P47750"/>
<dbReference type="jPOST" id="P47750"/>
<dbReference type="PaxDb" id="10090-ENSMUSP00000021346"/>
<dbReference type="ProteomicsDB" id="300047"/>
<dbReference type="Antibodypedia" id="4379">
    <property type="antibodies" value="1172 antibodies from 38 providers"/>
</dbReference>
<dbReference type="DNASU" id="22095"/>
<dbReference type="Ensembl" id="ENSMUST00000021346.14">
    <property type="protein sequence ID" value="ENSMUSP00000021346.8"/>
    <property type="gene ID" value="ENSMUSG00000020963.16"/>
</dbReference>
<dbReference type="GeneID" id="22095"/>
<dbReference type="KEGG" id="mmu:22095"/>
<dbReference type="UCSC" id="uc007okq.2">
    <property type="organism name" value="mouse"/>
</dbReference>
<dbReference type="AGR" id="MGI:98849"/>
<dbReference type="CTD" id="7253"/>
<dbReference type="MGI" id="MGI:98849">
    <property type="gene designation" value="Tshr"/>
</dbReference>
<dbReference type="VEuPathDB" id="HostDB:ENSMUSG00000020963"/>
<dbReference type="eggNOG" id="KOG2087">
    <property type="taxonomic scope" value="Eukaryota"/>
</dbReference>
<dbReference type="GeneTree" id="ENSGT00940000156510"/>
<dbReference type="HOGENOM" id="CLU_006130_1_1_1"/>
<dbReference type="InParanoid" id="P47750"/>
<dbReference type="OMA" id="TRDMRQS"/>
<dbReference type="OrthoDB" id="5981530at2759"/>
<dbReference type="PhylomeDB" id="P47750"/>
<dbReference type="TreeFam" id="TF316814"/>
<dbReference type="Reactome" id="R-MMU-375281">
    <property type="pathway name" value="Hormone ligand-binding receptors"/>
</dbReference>
<dbReference type="Reactome" id="R-MMU-418555">
    <property type="pathway name" value="G alpha (s) signalling events"/>
</dbReference>
<dbReference type="BioGRID-ORCS" id="22095">
    <property type="hits" value="0 hits in 78 CRISPR screens"/>
</dbReference>
<dbReference type="ChiTaRS" id="Tshr">
    <property type="organism name" value="mouse"/>
</dbReference>
<dbReference type="PRO" id="PR:P47750"/>
<dbReference type="Proteomes" id="UP000000589">
    <property type="component" value="Chromosome 12"/>
</dbReference>
<dbReference type="RNAct" id="P47750">
    <property type="molecule type" value="protein"/>
</dbReference>
<dbReference type="Bgee" id="ENSMUSG00000020963">
    <property type="expression patterns" value="Expressed in gonadal fat pad and 66 other cell types or tissues"/>
</dbReference>
<dbReference type="ExpressionAtlas" id="P47750">
    <property type="expression patterns" value="baseline and differential"/>
</dbReference>
<dbReference type="GO" id="GO:0016323">
    <property type="term" value="C:basolateral plasma membrane"/>
    <property type="evidence" value="ECO:0000250"/>
    <property type="project" value="UniProtKB"/>
</dbReference>
<dbReference type="GO" id="GO:0005886">
    <property type="term" value="C:plasma membrane"/>
    <property type="evidence" value="ECO:0000314"/>
    <property type="project" value="MGI"/>
</dbReference>
<dbReference type="GO" id="GO:0043235">
    <property type="term" value="C:receptor complex"/>
    <property type="evidence" value="ECO:0000266"/>
    <property type="project" value="MGI"/>
</dbReference>
<dbReference type="GO" id="GO:0044877">
    <property type="term" value="F:protein-containing complex binding"/>
    <property type="evidence" value="ECO:0000250"/>
    <property type="project" value="UniProtKB"/>
</dbReference>
<dbReference type="GO" id="GO:0004996">
    <property type="term" value="F:thyroid-stimulating hormone receptor activity"/>
    <property type="evidence" value="ECO:0000314"/>
    <property type="project" value="MGI"/>
</dbReference>
<dbReference type="GO" id="GO:0007189">
    <property type="term" value="P:adenylate cyclase-activating G protein-coupled receptor signaling pathway"/>
    <property type="evidence" value="ECO:0000314"/>
    <property type="project" value="MGI"/>
</dbReference>
<dbReference type="GO" id="GO:0008344">
    <property type="term" value="P:adult locomotory behavior"/>
    <property type="evidence" value="ECO:0000315"/>
    <property type="project" value="MGI"/>
</dbReference>
<dbReference type="GO" id="GO:0030183">
    <property type="term" value="P:B cell differentiation"/>
    <property type="evidence" value="ECO:0000315"/>
    <property type="project" value="MGI"/>
</dbReference>
<dbReference type="GO" id="GO:0007166">
    <property type="term" value="P:cell surface receptor signaling pathway"/>
    <property type="evidence" value="ECO:0000250"/>
    <property type="project" value="UniProtKB"/>
</dbReference>
<dbReference type="GO" id="GO:1904588">
    <property type="term" value="P:cellular response to glycoprotein"/>
    <property type="evidence" value="ECO:0000250"/>
    <property type="project" value="UniProtKB"/>
</dbReference>
<dbReference type="GO" id="GO:1905229">
    <property type="term" value="P:cellular response to thyrotropin-releasing hormone"/>
    <property type="evidence" value="ECO:0000250"/>
    <property type="project" value="UniProtKB"/>
</dbReference>
<dbReference type="GO" id="GO:0090103">
    <property type="term" value="P:cochlea morphogenesis"/>
    <property type="evidence" value="ECO:0000315"/>
    <property type="project" value="MGI"/>
</dbReference>
<dbReference type="GO" id="GO:0071542">
    <property type="term" value="P:dopaminergic neuron differentiation"/>
    <property type="evidence" value="ECO:0000315"/>
    <property type="project" value="MGI"/>
</dbReference>
<dbReference type="GO" id="GO:0060119">
    <property type="term" value="P:inner ear receptor cell development"/>
    <property type="evidence" value="ECO:0000315"/>
    <property type="project" value="MGI"/>
</dbReference>
<dbReference type="GO" id="GO:0060122">
    <property type="term" value="P:inner ear receptor cell stereocilium organization"/>
    <property type="evidence" value="ECO:0000315"/>
    <property type="project" value="MGI"/>
</dbReference>
<dbReference type="GO" id="GO:0120162">
    <property type="term" value="P:positive regulation of cold-induced thermogenesis"/>
    <property type="evidence" value="ECO:0000315"/>
    <property type="project" value="YuBioLab"/>
</dbReference>
<dbReference type="GO" id="GO:0040018">
    <property type="term" value="P:positive regulation of multicellular organism growth"/>
    <property type="evidence" value="ECO:0000315"/>
    <property type="project" value="MGI"/>
</dbReference>
<dbReference type="GO" id="GO:0040012">
    <property type="term" value="P:regulation of locomotion"/>
    <property type="evidence" value="ECO:0000315"/>
    <property type="project" value="MGI"/>
</dbReference>
<dbReference type="CDD" id="cd15964">
    <property type="entry name" value="7tmA_TSH-R"/>
    <property type="match status" value="1"/>
</dbReference>
<dbReference type="FunFam" id="1.20.1070.10:FF:000019">
    <property type="entry name" value="Lutropin-choriogonadotropic hormone receptor"/>
    <property type="match status" value="1"/>
</dbReference>
<dbReference type="FunFam" id="3.80.10.10:FF:000176">
    <property type="entry name" value="Thyrotropin receptor"/>
    <property type="match status" value="1"/>
</dbReference>
<dbReference type="Gene3D" id="1.20.1070.10">
    <property type="entry name" value="Rhodopsin 7-helix transmembrane proteins"/>
    <property type="match status" value="1"/>
</dbReference>
<dbReference type="Gene3D" id="3.80.10.10">
    <property type="entry name" value="Ribonuclease Inhibitor"/>
    <property type="match status" value="1"/>
</dbReference>
<dbReference type="InterPro" id="IPR000276">
    <property type="entry name" value="GPCR_Rhodpsn"/>
</dbReference>
<dbReference type="InterPro" id="IPR017452">
    <property type="entry name" value="GPCR_Rhodpsn_7TM"/>
</dbReference>
<dbReference type="InterPro" id="IPR002131">
    <property type="entry name" value="Gphrmn_rcpt_fam"/>
</dbReference>
<dbReference type="InterPro" id="IPR026906">
    <property type="entry name" value="LRR_5"/>
</dbReference>
<dbReference type="InterPro" id="IPR032675">
    <property type="entry name" value="LRR_dom_sf"/>
</dbReference>
<dbReference type="InterPro" id="IPR002274">
    <property type="entry name" value="TSH_rcpt"/>
</dbReference>
<dbReference type="PANTHER" id="PTHR24372">
    <property type="entry name" value="GLYCOPROTEIN HORMONE RECEPTOR"/>
    <property type="match status" value="1"/>
</dbReference>
<dbReference type="PANTHER" id="PTHR24372:SF0">
    <property type="entry name" value="THYROTROPIN RECEPTOR"/>
    <property type="match status" value="1"/>
</dbReference>
<dbReference type="Pfam" id="PF00001">
    <property type="entry name" value="7tm_1"/>
    <property type="match status" value="1"/>
</dbReference>
<dbReference type="Pfam" id="PF13306">
    <property type="entry name" value="LRR_5"/>
    <property type="match status" value="2"/>
</dbReference>
<dbReference type="PRINTS" id="PR00373">
    <property type="entry name" value="GLYCHORMONER"/>
</dbReference>
<dbReference type="PRINTS" id="PR00237">
    <property type="entry name" value="GPCRRHODOPSN"/>
</dbReference>
<dbReference type="PRINTS" id="PR01145">
    <property type="entry name" value="TSHRECEPTOR"/>
</dbReference>
<dbReference type="SUPFAM" id="SSF81321">
    <property type="entry name" value="Family A G protein-coupled receptor-like"/>
    <property type="match status" value="1"/>
</dbReference>
<dbReference type="SUPFAM" id="SSF52058">
    <property type="entry name" value="L domain-like"/>
    <property type="match status" value="1"/>
</dbReference>
<dbReference type="PROSITE" id="PS00237">
    <property type="entry name" value="G_PROTEIN_RECEP_F1_1"/>
    <property type="match status" value="1"/>
</dbReference>
<dbReference type="PROSITE" id="PS50262">
    <property type="entry name" value="G_PROTEIN_RECEP_F1_2"/>
    <property type="match status" value="1"/>
</dbReference>
<organism>
    <name type="scientific">Mus musculus</name>
    <name type="common">Mouse</name>
    <dbReference type="NCBI Taxonomy" id="10090"/>
    <lineage>
        <taxon>Eukaryota</taxon>
        <taxon>Metazoa</taxon>
        <taxon>Chordata</taxon>
        <taxon>Craniata</taxon>
        <taxon>Vertebrata</taxon>
        <taxon>Euteleostomi</taxon>
        <taxon>Mammalia</taxon>
        <taxon>Eutheria</taxon>
        <taxon>Euarchontoglires</taxon>
        <taxon>Glires</taxon>
        <taxon>Rodentia</taxon>
        <taxon>Myomorpha</taxon>
        <taxon>Muroidea</taxon>
        <taxon>Muridae</taxon>
        <taxon>Murinae</taxon>
        <taxon>Mus</taxon>
        <taxon>Mus</taxon>
    </lineage>
</organism>
<accession>P47750</accession>
<accession>Q562E4</accession>
<accession>Q9D697</accession>
<protein>
    <recommendedName>
        <fullName>Thyrotropin receptor</fullName>
    </recommendedName>
    <alternativeName>
        <fullName>Thyroid-stimulating hormone receptor</fullName>
        <shortName>TSH-R</shortName>
    </alternativeName>
</protein>
<proteinExistence type="evidence at protein level"/>